<proteinExistence type="inferred from homology"/>
<keyword id="KW-1185">Reference proteome</keyword>
<keyword id="KW-0749">Sporulation</keyword>
<feature type="chain" id="PRO_0000221462" description="Small, acid-soluble spore protein K">
    <location>
        <begin position="1"/>
        <end position="49"/>
    </location>
</feature>
<feature type="region of interest" description="Disordered" evidence="2">
    <location>
        <begin position="1"/>
        <end position="49"/>
    </location>
</feature>
<feature type="compositionally biased region" description="Basic and acidic residues" evidence="2">
    <location>
        <begin position="16"/>
        <end position="32"/>
    </location>
</feature>
<feature type="compositionally biased region" description="Basic and acidic residues" evidence="2">
    <location>
        <begin position="39"/>
        <end position="49"/>
    </location>
</feature>
<evidence type="ECO:0000255" key="1">
    <source>
        <dbReference type="HAMAP-Rule" id="MF_01504"/>
    </source>
</evidence>
<evidence type="ECO:0000256" key="2">
    <source>
        <dbReference type="SAM" id="MobiDB-lite"/>
    </source>
</evidence>
<organism>
    <name type="scientific">Bacillus licheniformis (strain ATCC 14580 / DSM 13 / JCM 2505 / CCUG 7422 / NBRC 12200 / NCIMB 9375 / NCTC 10341 / NRRL NRS-1264 / Gibson 46)</name>
    <dbReference type="NCBI Taxonomy" id="279010"/>
    <lineage>
        <taxon>Bacteria</taxon>
        <taxon>Bacillati</taxon>
        <taxon>Bacillota</taxon>
        <taxon>Bacilli</taxon>
        <taxon>Bacillales</taxon>
        <taxon>Bacillaceae</taxon>
        <taxon>Bacillus</taxon>
    </lineage>
</organism>
<accession>Q65MA1</accession>
<name>SSPK_BACLD</name>
<protein>
    <recommendedName>
        <fullName evidence="1">Small, acid-soluble spore protein K</fullName>
        <shortName evidence="1">SASP K</shortName>
    </recommendedName>
</protein>
<gene>
    <name evidence="1" type="primary">sspK</name>
    <name type="ordered locus">BLi00879</name>
    <name type="ordered locus">BL05073</name>
</gene>
<dbReference type="EMBL" id="AE017333">
    <property type="protein sequence ID" value="AAU39813.1"/>
    <property type="molecule type" value="Genomic_DNA"/>
</dbReference>
<dbReference type="EMBL" id="CP000002">
    <property type="protein sequence ID" value="AAU22465.1"/>
    <property type="molecule type" value="Genomic_DNA"/>
</dbReference>
<dbReference type="RefSeq" id="WP_003179924.1">
    <property type="nucleotide sequence ID" value="NC_006322.1"/>
</dbReference>
<dbReference type="STRING" id="279010.BL05073"/>
<dbReference type="KEGG" id="bld:BLi00879"/>
<dbReference type="KEGG" id="bli:BL05073"/>
<dbReference type="eggNOG" id="ENOG5033JD2">
    <property type="taxonomic scope" value="Bacteria"/>
</dbReference>
<dbReference type="HOGENOM" id="CLU_204383_0_0_9"/>
<dbReference type="Proteomes" id="UP000000606">
    <property type="component" value="Chromosome"/>
</dbReference>
<dbReference type="GO" id="GO:0042601">
    <property type="term" value="C:endospore-forming forespore"/>
    <property type="evidence" value="ECO:0007669"/>
    <property type="project" value="InterPro"/>
</dbReference>
<dbReference type="GO" id="GO:0030436">
    <property type="term" value="P:asexual sporulation"/>
    <property type="evidence" value="ECO:0007669"/>
    <property type="project" value="UniProtKB-UniRule"/>
</dbReference>
<dbReference type="GO" id="GO:0030435">
    <property type="term" value="P:sporulation resulting in formation of a cellular spore"/>
    <property type="evidence" value="ECO:0007669"/>
    <property type="project" value="UniProtKB-KW"/>
</dbReference>
<dbReference type="HAMAP" id="MF_01504">
    <property type="entry name" value="SspK"/>
    <property type="match status" value="1"/>
</dbReference>
<dbReference type="InterPro" id="IPR012611">
    <property type="entry name" value="SASP_SspK"/>
</dbReference>
<dbReference type="NCBIfam" id="NF002843">
    <property type="entry name" value="PRK03081.1"/>
    <property type="match status" value="1"/>
</dbReference>
<dbReference type="NCBIfam" id="TIGR03091">
    <property type="entry name" value="SASP_sspK"/>
    <property type="match status" value="1"/>
</dbReference>
<dbReference type="Pfam" id="PF08176">
    <property type="entry name" value="SspK"/>
    <property type="match status" value="1"/>
</dbReference>
<reference key="1">
    <citation type="journal article" date="2004" name="J. Mol. Microbiol. Biotechnol.">
        <title>The complete genome sequence of Bacillus licheniformis DSM13, an organism with great industrial potential.</title>
        <authorList>
            <person name="Veith B."/>
            <person name="Herzberg C."/>
            <person name="Steckel S."/>
            <person name="Feesche J."/>
            <person name="Maurer K.H."/>
            <person name="Ehrenreich P."/>
            <person name="Baeumer S."/>
            <person name="Henne A."/>
            <person name="Liesegang H."/>
            <person name="Merkl R."/>
            <person name="Ehrenreich A."/>
            <person name="Gottschalk G."/>
        </authorList>
    </citation>
    <scope>NUCLEOTIDE SEQUENCE [LARGE SCALE GENOMIC DNA]</scope>
    <source>
        <strain>ATCC 14580 / DSM 13 / JCM 2505 / CCUG 7422 / NBRC 12200 / NCIMB 9375 / NCTC 10341 / NRRL NRS-1264 / Gibson 46</strain>
    </source>
</reference>
<reference key="2">
    <citation type="journal article" date="2004" name="Genome Biol.">
        <title>Complete genome sequence of the industrial bacterium Bacillus licheniformis and comparisons with closely related Bacillus species.</title>
        <authorList>
            <person name="Rey M.W."/>
            <person name="Ramaiya P."/>
            <person name="Nelson B.A."/>
            <person name="Brody-Karpin S.D."/>
            <person name="Zaretsky E.J."/>
            <person name="Tang M."/>
            <person name="Lopez de Leon A."/>
            <person name="Xiang H."/>
            <person name="Gusti V."/>
            <person name="Clausen I.G."/>
            <person name="Olsen P.B."/>
            <person name="Rasmussen M.D."/>
            <person name="Andersen J.T."/>
            <person name="Joergensen P.L."/>
            <person name="Larsen T.S."/>
            <person name="Sorokin A."/>
            <person name="Bolotin A."/>
            <person name="Lapidus A."/>
            <person name="Galleron N."/>
            <person name="Ehrlich S.D."/>
            <person name="Berka R.M."/>
        </authorList>
    </citation>
    <scope>NUCLEOTIDE SEQUENCE [LARGE SCALE GENOMIC DNA]</scope>
    <source>
        <strain>ATCC 14580 / DSM 13 / JCM 2505 / CCUG 7422 / NBRC 12200 / NCIMB 9375 / NCTC 10341 / NRRL NRS-1264 / Gibson 46</strain>
    </source>
</reference>
<comment type="subcellular location">
    <subcellularLocation>
        <location evidence="1">Spore core</location>
    </subcellularLocation>
</comment>
<comment type="induction">
    <text evidence="1">Expressed only in the forespore compartment of sporulating cells.</text>
</comment>
<comment type="similarity">
    <text evidence="1">Belongs to the SspK family.</text>
</comment>
<sequence length="49" mass="5650">MRNKSRGFPNMNNNKFEGEPRAKDDFASKRPDGSTNTHPQERMRASGKR</sequence>